<evidence type="ECO:0000255" key="1">
    <source>
        <dbReference type="HAMAP-Rule" id="MF_01305"/>
    </source>
</evidence>
<evidence type="ECO:0000256" key="2">
    <source>
        <dbReference type="SAM" id="MobiDB-lite"/>
    </source>
</evidence>
<comment type="function">
    <text evidence="1">One of the components of the core complex of photosystem II (PSII). PSII is a light-driven water:plastoquinone oxidoreductase that uses light energy to abstract electrons from H(2)O, generating O(2) and a proton gradient subsequently used for ATP formation. It consists of a core antenna complex that captures photons, and an electron transfer chain that converts photonic excitation into a charge separation.</text>
</comment>
<comment type="subunit">
    <text evidence="1">PSII is composed of 1 copy each of membrane proteins PsbA, PsbB, PsbC, PsbD, PsbE, PsbF, PsbH, PsbI, PsbJ, PsbK, PsbL, PsbM, PsbT, PsbX, PsbY, PsbZ, Psb30/Ycf12, peripheral proteins PsbO, CyanoQ (PsbQ), PsbU, PsbV and a large number of cofactors. It forms dimeric complexes.</text>
</comment>
<comment type="subcellular location">
    <subcellularLocation>
        <location evidence="1">Cellular thylakoid membrane</location>
        <topology evidence="1">Single-pass membrane protein</topology>
    </subcellularLocation>
</comment>
<comment type="similarity">
    <text evidence="1">Belongs to the PsbJ family.</text>
</comment>
<organism>
    <name type="scientific">Synechococcus sp. (strain CC9605)</name>
    <dbReference type="NCBI Taxonomy" id="110662"/>
    <lineage>
        <taxon>Bacteria</taxon>
        <taxon>Bacillati</taxon>
        <taxon>Cyanobacteriota</taxon>
        <taxon>Cyanophyceae</taxon>
        <taxon>Synechococcales</taxon>
        <taxon>Synechococcaceae</taxon>
        <taxon>Synechococcus</taxon>
    </lineage>
</organism>
<gene>
    <name evidence="1" type="primary">psbJ</name>
    <name type="ordered locus">Syncc9605_0197</name>
</gene>
<keyword id="KW-0472">Membrane</keyword>
<keyword id="KW-0602">Photosynthesis</keyword>
<keyword id="KW-0604">Photosystem II</keyword>
<keyword id="KW-0674">Reaction center</keyword>
<keyword id="KW-0793">Thylakoid</keyword>
<keyword id="KW-0812">Transmembrane</keyword>
<keyword id="KW-1133">Transmembrane helix</keyword>
<protein>
    <recommendedName>
        <fullName evidence="1">Photosystem II reaction center protein J</fullName>
        <shortName evidence="1">PSII-J</shortName>
    </recommendedName>
</protein>
<accession>Q3AN59</accession>
<feature type="chain" id="PRO_0000292236" description="Photosystem II reaction center protein J">
    <location>
        <begin position="1"/>
        <end position="66"/>
    </location>
</feature>
<feature type="transmembrane region" description="Helical" evidence="1">
    <location>
        <begin position="37"/>
        <end position="57"/>
    </location>
</feature>
<feature type="region of interest" description="Disordered" evidence="2">
    <location>
        <begin position="1"/>
        <end position="25"/>
    </location>
</feature>
<sequence>MSGKKSPYPDGRIPDRNPDGTPAVPWRSRWTEGVLPLWLVATAGGMAVLFVVGLFFYGSYTGVGSA</sequence>
<dbReference type="EMBL" id="CP000110">
    <property type="protein sequence ID" value="ABB33973.1"/>
    <property type="molecule type" value="Genomic_DNA"/>
</dbReference>
<dbReference type="RefSeq" id="WP_011363231.1">
    <property type="nucleotide sequence ID" value="NC_007516.1"/>
</dbReference>
<dbReference type="SMR" id="Q3AN59"/>
<dbReference type="STRING" id="110662.Syncc9605_0197"/>
<dbReference type="KEGG" id="syd:Syncc9605_0197"/>
<dbReference type="eggNOG" id="ENOG5030SSD">
    <property type="taxonomic scope" value="Bacteria"/>
</dbReference>
<dbReference type="HOGENOM" id="CLU_2829784_0_0_3"/>
<dbReference type="OrthoDB" id="466474at2"/>
<dbReference type="GO" id="GO:0009539">
    <property type="term" value="C:photosystem II reaction center"/>
    <property type="evidence" value="ECO:0007669"/>
    <property type="project" value="InterPro"/>
</dbReference>
<dbReference type="GO" id="GO:0031676">
    <property type="term" value="C:plasma membrane-derived thylakoid membrane"/>
    <property type="evidence" value="ECO:0007669"/>
    <property type="project" value="UniProtKB-SubCell"/>
</dbReference>
<dbReference type="GO" id="GO:0015979">
    <property type="term" value="P:photosynthesis"/>
    <property type="evidence" value="ECO:0007669"/>
    <property type="project" value="UniProtKB-UniRule"/>
</dbReference>
<dbReference type="Gene3D" id="6.10.250.2070">
    <property type="match status" value="1"/>
</dbReference>
<dbReference type="HAMAP" id="MF_01305">
    <property type="entry name" value="PSII_PsbJ"/>
    <property type="match status" value="1"/>
</dbReference>
<dbReference type="InterPro" id="IPR002682">
    <property type="entry name" value="PSII_PsbJ"/>
</dbReference>
<dbReference type="InterPro" id="IPR037267">
    <property type="entry name" value="PSII_PsbJ_sf"/>
</dbReference>
<dbReference type="NCBIfam" id="NF002722">
    <property type="entry name" value="PRK02565.1"/>
    <property type="match status" value="1"/>
</dbReference>
<dbReference type="Pfam" id="PF01788">
    <property type="entry name" value="PsbJ"/>
    <property type="match status" value="1"/>
</dbReference>
<dbReference type="SUPFAM" id="SSF161021">
    <property type="entry name" value="Photosystem II reaction center protein J, PsbJ"/>
    <property type="match status" value="1"/>
</dbReference>
<name>PSBJ_SYNSC</name>
<proteinExistence type="inferred from homology"/>
<reference key="1">
    <citation type="submission" date="2005-07" db="EMBL/GenBank/DDBJ databases">
        <title>Complete sequence of Synechococcus sp. CC9605.</title>
        <authorList>
            <consortium name="US DOE Joint Genome Institute"/>
            <person name="Copeland A."/>
            <person name="Lucas S."/>
            <person name="Lapidus A."/>
            <person name="Barry K."/>
            <person name="Detter J.C."/>
            <person name="Glavina T."/>
            <person name="Hammon N."/>
            <person name="Israni S."/>
            <person name="Pitluck S."/>
            <person name="Schmutz J."/>
            <person name="Martinez M."/>
            <person name="Larimer F."/>
            <person name="Land M."/>
            <person name="Kyrpides N."/>
            <person name="Ivanova N."/>
            <person name="Richardson P."/>
        </authorList>
    </citation>
    <scope>NUCLEOTIDE SEQUENCE [LARGE SCALE GENOMIC DNA]</scope>
    <source>
        <strain>CC9605</strain>
    </source>
</reference>